<comment type="function">
    <text evidence="1">Key component of inflammasomes that indirectly senses specific proteins from pathogenic bacteria and fungi and responds by assembling an inflammasome complex that promotes caspase-1 activation, cytokine production and macrophage pyroptosis.</text>
</comment>
<comment type="subcellular location">
    <subcellularLocation>
        <location evidence="1">Cytoplasm</location>
        <location evidence="1">Cytosol</location>
    </subcellularLocation>
</comment>
<feature type="chain" id="PRO_0000419977" description="NLR family CARD domain-containing protein 4">
    <location>
        <begin position="1"/>
        <end position="997"/>
    </location>
</feature>
<feature type="domain" description="CARD" evidence="2">
    <location>
        <begin position="1"/>
        <end position="88"/>
    </location>
</feature>
<feature type="domain" description="NACHT" evidence="3">
    <location>
        <begin position="165"/>
        <end position="478"/>
    </location>
</feature>
<feature type="repeat" description="LRR 1">
    <location>
        <begin position="550"/>
        <end position="570"/>
    </location>
</feature>
<feature type="repeat" description="LRR 2">
    <location>
        <begin position="629"/>
        <end position="652"/>
    </location>
</feature>
<feature type="repeat" description="LRR 3">
    <location>
        <begin position="708"/>
        <end position="731"/>
    </location>
</feature>
<feature type="repeat" description="LRR 4">
    <location>
        <begin position="735"/>
        <end position="758"/>
    </location>
</feature>
<feature type="repeat" description="LRR 5">
    <location>
        <begin position="760"/>
        <end position="785"/>
    </location>
</feature>
<feature type="repeat" description="LRR 6">
    <location>
        <begin position="797"/>
        <end position="820"/>
    </location>
</feature>
<feature type="repeat" description="LRR 7">
    <location>
        <begin position="821"/>
        <end position="843"/>
    </location>
</feature>
<feature type="repeat" description="LRR 8">
    <location>
        <begin position="851"/>
        <end position="875"/>
    </location>
</feature>
<feature type="repeat" description="LRR 9">
    <location>
        <begin position="884"/>
        <end position="905"/>
    </location>
</feature>
<feature type="repeat" description="LRR 10">
    <location>
        <begin position="908"/>
        <end position="935"/>
    </location>
</feature>
<feature type="repeat" description="LRR 11">
    <location>
        <begin position="937"/>
        <end position="958"/>
    </location>
</feature>
<feature type="repeat" description="LRR 12">
    <location>
        <begin position="972"/>
        <end position="994"/>
    </location>
</feature>
<feature type="region of interest" description="Nucleotide-binding domain (NBD)" evidence="1">
    <location>
        <begin position="95"/>
        <end position="300"/>
    </location>
</feature>
<feature type="region of interest" description="Winged-helix domain (WHD)" evidence="1">
    <location>
        <begin position="358"/>
        <end position="465"/>
    </location>
</feature>
<feature type="binding site" evidence="3">
    <location>
        <begin position="171"/>
        <end position="178"/>
    </location>
    <ligand>
        <name>ATP</name>
        <dbReference type="ChEBI" id="CHEBI:30616"/>
    </ligand>
</feature>
<feature type="sequence conflict" description="In Ref. 2; CAJ83589." evidence="4" ref="2">
    <original>Y</original>
    <variation>F</variation>
    <location>
        <position position="443"/>
    </location>
</feature>
<proteinExistence type="evidence at transcript level"/>
<name>NLRC4_XENTR</name>
<protein>
    <recommendedName>
        <fullName>NLR family CARD domain-containing protein 4</fullName>
    </recommendedName>
    <alternativeName>
        <fullName>Ice protease-activating factor</fullName>
        <shortName>Ipaf</shortName>
    </alternativeName>
</protein>
<dbReference type="EMBL" id="AAMC01027550">
    <property type="status" value="NOT_ANNOTATED_CDS"/>
    <property type="molecule type" value="Genomic_DNA"/>
</dbReference>
<dbReference type="EMBL" id="AAMC01027551">
    <property type="status" value="NOT_ANNOTATED_CDS"/>
    <property type="molecule type" value="Genomic_DNA"/>
</dbReference>
<dbReference type="EMBL" id="CR848622">
    <property type="protein sequence ID" value="CAJ83589.1"/>
    <property type="molecule type" value="mRNA"/>
</dbReference>
<dbReference type="SMR" id="F6R2G2"/>
<dbReference type="FunCoup" id="F6R2G2">
    <property type="interactions" value="267"/>
</dbReference>
<dbReference type="STRING" id="8364.ENSXETP00000018561"/>
<dbReference type="PaxDb" id="8364-ENSXETP00000040025"/>
<dbReference type="eggNOG" id="ENOG502QWRJ">
    <property type="taxonomic scope" value="Eukaryota"/>
</dbReference>
<dbReference type="InParanoid" id="F6R2G2"/>
<dbReference type="Proteomes" id="UP000008143">
    <property type="component" value="Unplaced"/>
</dbReference>
<dbReference type="GO" id="GO:0005829">
    <property type="term" value="C:cytosol"/>
    <property type="evidence" value="ECO:0007669"/>
    <property type="project" value="UniProtKB-SubCell"/>
</dbReference>
<dbReference type="GO" id="GO:0005524">
    <property type="term" value="F:ATP binding"/>
    <property type="evidence" value="ECO:0007669"/>
    <property type="project" value="UniProtKB-KW"/>
</dbReference>
<dbReference type="GO" id="GO:0006915">
    <property type="term" value="P:apoptotic process"/>
    <property type="evidence" value="ECO:0007669"/>
    <property type="project" value="UniProtKB-KW"/>
</dbReference>
<dbReference type="GO" id="GO:0006954">
    <property type="term" value="P:inflammatory response"/>
    <property type="evidence" value="ECO:0007669"/>
    <property type="project" value="UniProtKB-KW"/>
</dbReference>
<dbReference type="GO" id="GO:0045087">
    <property type="term" value="P:innate immune response"/>
    <property type="evidence" value="ECO:0007669"/>
    <property type="project" value="UniProtKB-KW"/>
</dbReference>
<dbReference type="GO" id="GO:0042981">
    <property type="term" value="P:regulation of apoptotic process"/>
    <property type="evidence" value="ECO:0007669"/>
    <property type="project" value="InterPro"/>
</dbReference>
<dbReference type="CDD" id="cd01671">
    <property type="entry name" value="CARD"/>
    <property type="match status" value="1"/>
</dbReference>
<dbReference type="FunFam" id="3.80.10.10:FF:000364">
    <property type="entry name" value="NLR family CARD domain containing 4"/>
    <property type="match status" value="1"/>
</dbReference>
<dbReference type="Gene3D" id="1.10.1900.50">
    <property type="match status" value="1"/>
</dbReference>
<dbReference type="Gene3D" id="1.10.533.10">
    <property type="entry name" value="Death Domain, Fas"/>
    <property type="match status" value="1"/>
</dbReference>
<dbReference type="Gene3D" id="3.40.50.300">
    <property type="entry name" value="P-loop containing nucleotide triphosphate hydrolases"/>
    <property type="match status" value="1"/>
</dbReference>
<dbReference type="Gene3D" id="3.80.10.10">
    <property type="entry name" value="Ribonuclease Inhibitor"/>
    <property type="match status" value="1"/>
</dbReference>
<dbReference type="InterPro" id="IPR001315">
    <property type="entry name" value="CARD"/>
</dbReference>
<dbReference type="InterPro" id="IPR011029">
    <property type="entry name" value="DEATH-like_dom_sf"/>
</dbReference>
<dbReference type="InterPro" id="IPR006553">
    <property type="entry name" value="Leu-rich_rpt_Cys-con_subtyp"/>
</dbReference>
<dbReference type="InterPro" id="IPR032675">
    <property type="entry name" value="LRR_dom_sf"/>
</dbReference>
<dbReference type="InterPro" id="IPR007111">
    <property type="entry name" value="NACHT_NTPase"/>
</dbReference>
<dbReference type="InterPro" id="IPR042220">
    <property type="entry name" value="NLRC4"/>
</dbReference>
<dbReference type="InterPro" id="IPR053882">
    <property type="entry name" value="Nlrc4-like_WHD"/>
</dbReference>
<dbReference type="InterPro" id="IPR040535">
    <property type="entry name" value="NLRC4_HD"/>
</dbReference>
<dbReference type="InterPro" id="IPR027417">
    <property type="entry name" value="P-loop_NTPase"/>
</dbReference>
<dbReference type="PANTHER" id="PTHR47688">
    <property type="entry name" value="NLR FAMILY CARD DOMAIN-CONTAINING PROTEIN 4"/>
    <property type="match status" value="1"/>
</dbReference>
<dbReference type="PANTHER" id="PTHR47688:SF1">
    <property type="entry name" value="NLR FAMILY CARD DOMAIN-CONTAINING PROTEIN 4"/>
    <property type="match status" value="1"/>
</dbReference>
<dbReference type="Pfam" id="PF00619">
    <property type="entry name" value="CARD"/>
    <property type="match status" value="1"/>
</dbReference>
<dbReference type="Pfam" id="PF05729">
    <property type="entry name" value="NACHT"/>
    <property type="match status" value="1"/>
</dbReference>
<dbReference type="Pfam" id="PF22524">
    <property type="entry name" value="Nlrc4-like_WHD"/>
    <property type="match status" value="1"/>
</dbReference>
<dbReference type="Pfam" id="PF17889">
    <property type="entry name" value="NLRC4_HD"/>
    <property type="match status" value="1"/>
</dbReference>
<dbReference type="SMART" id="SM00367">
    <property type="entry name" value="LRR_CC"/>
    <property type="match status" value="3"/>
</dbReference>
<dbReference type="SUPFAM" id="SSF47986">
    <property type="entry name" value="DEATH domain"/>
    <property type="match status" value="1"/>
</dbReference>
<dbReference type="SUPFAM" id="SSF52540">
    <property type="entry name" value="P-loop containing nucleoside triphosphate hydrolases"/>
    <property type="match status" value="1"/>
</dbReference>
<dbReference type="SUPFAM" id="SSF52047">
    <property type="entry name" value="RNI-like"/>
    <property type="match status" value="1"/>
</dbReference>
<dbReference type="PROSITE" id="PS50209">
    <property type="entry name" value="CARD"/>
    <property type="match status" value="1"/>
</dbReference>
<dbReference type="PROSITE" id="PS50837">
    <property type="entry name" value="NACHT"/>
    <property type="match status" value="1"/>
</dbReference>
<organism>
    <name type="scientific">Xenopus tropicalis</name>
    <name type="common">Western clawed frog</name>
    <name type="synonym">Silurana tropicalis</name>
    <dbReference type="NCBI Taxonomy" id="8364"/>
    <lineage>
        <taxon>Eukaryota</taxon>
        <taxon>Metazoa</taxon>
        <taxon>Chordata</taxon>
        <taxon>Craniata</taxon>
        <taxon>Vertebrata</taxon>
        <taxon>Euteleostomi</taxon>
        <taxon>Amphibia</taxon>
        <taxon>Batrachia</taxon>
        <taxon>Anura</taxon>
        <taxon>Pipoidea</taxon>
        <taxon>Pipidae</taxon>
        <taxon>Xenopodinae</taxon>
        <taxon>Xenopus</taxon>
        <taxon>Silurana</taxon>
    </lineage>
</organism>
<reference key="1">
    <citation type="journal article" date="2010" name="Science">
        <title>The genome of the Western clawed frog Xenopus tropicalis.</title>
        <authorList>
            <person name="Hellsten U."/>
            <person name="Harland R.M."/>
            <person name="Gilchrist M.J."/>
            <person name="Hendrix D."/>
            <person name="Jurka J."/>
            <person name="Kapitonov V."/>
            <person name="Ovcharenko I."/>
            <person name="Putnam N.H."/>
            <person name="Shu S."/>
            <person name="Taher L."/>
            <person name="Blitz I.L."/>
            <person name="Blumberg B."/>
            <person name="Dichmann D.S."/>
            <person name="Dubchak I."/>
            <person name="Amaya E."/>
            <person name="Detter J.C."/>
            <person name="Fletcher R."/>
            <person name="Gerhard D.S."/>
            <person name="Goodstein D."/>
            <person name="Graves T."/>
            <person name="Grigoriev I.V."/>
            <person name="Grimwood J."/>
            <person name="Kawashima T."/>
            <person name="Lindquist E."/>
            <person name="Lucas S.M."/>
            <person name="Mead P.E."/>
            <person name="Mitros T."/>
            <person name="Ogino H."/>
            <person name="Ohta Y."/>
            <person name="Poliakov A.V."/>
            <person name="Pollet N."/>
            <person name="Robert J."/>
            <person name="Salamov A."/>
            <person name="Sater A.K."/>
            <person name="Schmutz J."/>
            <person name="Terry A."/>
            <person name="Vize P.D."/>
            <person name="Warren W.C."/>
            <person name="Wells D."/>
            <person name="Wills A."/>
            <person name="Wilson R.K."/>
            <person name="Zimmerman L.B."/>
            <person name="Zorn A.M."/>
            <person name="Grainger R."/>
            <person name="Grammer T."/>
            <person name="Khokha M.K."/>
            <person name="Richardson P.M."/>
            <person name="Rokhsar D.S."/>
        </authorList>
    </citation>
    <scope>NUCLEOTIDE SEQUENCE [LARGE SCALE GENOMIC DNA]</scope>
</reference>
<reference key="2">
    <citation type="submission" date="2005-07" db="EMBL/GenBank/DDBJ databases">
        <authorList>
            <consortium name="Sanger Xenopus tropicalis EST/cDNA project"/>
        </authorList>
    </citation>
    <scope>NUCLEOTIDE SEQUENCE [LARGE SCALE MRNA] OF 38-646</scope>
    <source>
        <tissue>Gastrula</tissue>
    </source>
</reference>
<accession>F6R2G2</accession>
<accession>Q28DS5</accession>
<evidence type="ECO:0000250" key="1"/>
<evidence type="ECO:0000255" key="2">
    <source>
        <dbReference type="PROSITE-ProRule" id="PRU00046"/>
    </source>
</evidence>
<evidence type="ECO:0000255" key="3">
    <source>
        <dbReference type="PROSITE-ProRule" id="PRU00136"/>
    </source>
</evidence>
<evidence type="ECO:0000305" key="4"/>
<gene>
    <name type="primary">nlrc4</name>
    <name type="synonym">ipaf</name>
    <name type="ORF">TGas028l14.1</name>
</gene>
<keyword id="KW-0053">Apoptosis</keyword>
<keyword id="KW-0067">ATP-binding</keyword>
<keyword id="KW-0963">Cytoplasm</keyword>
<keyword id="KW-0391">Immunity</keyword>
<keyword id="KW-0395">Inflammatory response</keyword>
<keyword id="KW-0399">Innate immunity</keyword>
<keyword id="KW-0433">Leucine-rich repeat</keyword>
<keyword id="KW-0547">Nucleotide-binding</keyword>
<keyword id="KW-1185">Reference proteome</keyword>
<keyword id="KW-0677">Repeat</keyword>
<sequence length="997" mass="113626">MDLIRKNYAELVQRMGRTIAVQITNDLFTRNILSMGEMEEILSCKVAQDLTRELLNVILKKGTESCTRLLQSLENQDPFFYEDLIGQRVQSGVTEEDLENLADHLKRLYQYPFFKKFNPLGEDTDIDIIFDLDRTFTDPLLWRKGTLNRREKQLTLSEMLEQLESPCVIEGEAGKGKTTILKRIAMLWASEKCRALADFKLVFFVTLRGASEGLYETLSDQLFPITYSWNKKEFLNKIWHLGRKVLFLLDGYDEFQSESCTEIEELIKNNPKFNSTVIVSTRTETIGKLRRCGALIAETSDFSLDNAKQLIANVLEEDEANGLLFQLEESSFMQNLMKTPLFVVIACALRMGESDFQMNTQTTLFSTLYDLMVEKKKYKIRHLSANILAANIRKFGDLALDGLFEQRFDFNEKHLSKIKEEVLLNIGLLNKYTAQRRKAVYRYFHTTFQEYIAGRRLSQLLSSEDNSDVTKGEDFLNKIVSVFDITTKYKNLLLYTCGSSKVATQKVVKHVAEVHKHDKNNYSTELVEFGLNLFFESSTKKELSQDFETLFSEKCLYINSHNISSHHIEFFLYLPNCLSALQLIKLDLSGTFATVPSESTMDRDSKSAQSSVCDNYIPEKAVKLFFDWNQSIQTLEVTLRDFHQLNKKDIKYLGKICCSADSLRLNIKRSSGITGSLVGVLESCKNIQDLNVDSTKLSIEDERRIVQMTEMKTLSILNLHSEHLQGGLLEGLCNLVGLEKLVFHNIKIDKNDAKTLAEGILSLKKLKRLSISHISNIGDGMESIAESISLCCHELKELKLIDCCLSAKALRSLGQSLYSLSHIEILDLSGNYLLEEGKESVEELAANLTHLDAIRTLMLPGGTDVKFCLEAVLPTLRRIPTLSELAFKRWNLTNDDLMTLASYINSGFENLSFLDLSDNCAQSAGWLSLTAILQYLPNLTYVNFSTEDLFTPDPDLVRKLVRAISALPLLHTMELNNWQLDDFDLAQIKKAKNMIHR</sequence>